<gene>
    <name evidence="1" type="primary">atpA</name>
</gene>
<sequence length="529" mass="57271">MAELTIRPEEIRDALENFVQSYKPDAASREEVGTVTLAGDGIAKVEGLPSAMANELLKFEDGTLGLALNLEEREIGCVVLGEFSGIEEGQPVSRTGEVLSVAVAEGYLGRVVDPLGNPIDGLGEIETSGRRALELQAPTVMQRKSVHEPMETGYKAVDAMTPIGRGQRQLIIGDRQTGKTALAVDTIINQRDNWRTGDPNKQVRCIYVAIGQKGSTIASVRGALEENGALEYTTIVAAPASDPAGFKYLAPYTGSAIGQQWMYEGKHVLIIFDDLSKQADAYRAVSLLLRRPPGREAYPGDVFYLHSRLLERCAKLSDAEGAGSMTGLPIVETKANDVSAFIPTNVISITDGQCFLESDLFNAGQRPALNVGISVSRVGGSAQHKAMKQVSGRLRVDLAQFRELEAFAAFGSDLDAASKSQLERGQRMVELLKQNQYQPMSTEDQVVSVWAGTTGKMDEVPVADIRRFEKELLEYLHRQEQGLMTSIREGGKMSDDTLQAVAEAIAAFKKQFETSDGKLLGEDAPSAAK</sequence>
<dbReference type="EC" id="7.1.2.2" evidence="1"/>
<dbReference type="EMBL" id="Z22606">
    <property type="protein sequence ID" value="CAA80325.1"/>
    <property type="molecule type" value="Genomic_DNA"/>
</dbReference>
<dbReference type="PIR" id="S37545">
    <property type="entry name" value="S37545"/>
</dbReference>
<dbReference type="SMR" id="P50001"/>
<dbReference type="GO" id="GO:0005886">
    <property type="term" value="C:plasma membrane"/>
    <property type="evidence" value="ECO:0007669"/>
    <property type="project" value="UniProtKB-SubCell"/>
</dbReference>
<dbReference type="GO" id="GO:0045259">
    <property type="term" value="C:proton-transporting ATP synthase complex"/>
    <property type="evidence" value="ECO:0007669"/>
    <property type="project" value="UniProtKB-KW"/>
</dbReference>
<dbReference type="GO" id="GO:0043531">
    <property type="term" value="F:ADP binding"/>
    <property type="evidence" value="ECO:0007669"/>
    <property type="project" value="TreeGrafter"/>
</dbReference>
<dbReference type="GO" id="GO:0005524">
    <property type="term" value="F:ATP binding"/>
    <property type="evidence" value="ECO:0007669"/>
    <property type="project" value="UniProtKB-UniRule"/>
</dbReference>
<dbReference type="GO" id="GO:0046933">
    <property type="term" value="F:proton-transporting ATP synthase activity, rotational mechanism"/>
    <property type="evidence" value="ECO:0007669"/>
    <property type="project" value="UniProtKB-UniRule"/>
</dbReference>
<dbReference type="CDD" id="cd18113">
    <property type="entry name" value="ATP-synt_F1_alpha_C"/>
    <property type="match status" value="1"/>
</dbReference>
<dbReference type="CDD" id="cd18116">
    <property type="entry name" value="ATP-synt_F1_alpha_N"/>
    <property type="match status" value="1"/>
</dbReference>
<dbReference type="CDD" id="cd01132">
    <property type="entry name" value="F1-ATPase_alpha_CD"/>
    <property type="match status" value="1"/>
</dbReference>
<dbReference type="FunFam" id="1.20.150.20:FF:000001">
    <property type="entry name" value="ATP synthase subunit alpha"/>
    <property type="match status" value="1"/>
</dbReference>
<dbReference type="FunFam" id="3.40.50.300:FF:000002">
    <property type="entry name" value="ATP synthase subunit alpha"/>
    <property type="match status" value="1"/>
</dbReference>
<dbReference type="Gene3D" id="2.40.30.20">
    <property type="match status" value="1"/>
</dbReference>
<dbReference type="Gene3D" id="1.20.150.20">
    <property type="entry name" value="ATP synthase alpha/beta chain, C-terminal domain"/>
    <property type="match status" value="1"/>
</dbReference>
<dbReference type="Gene3D" id="3.40.50.300">
    <property type="entry name" value="P-loop containing nucleotide triphosphate hydrolases"/>
    <property type="match status" value="1"/>
</dbReference>
<dbReference type="HAMAP" id="MF_01346">
    <property type="entry name" value="ATP_synth_alpha_bact"/>
    <property type="match status" value="1"/>
</dbReference>
<dbReference type="InterPro" id="IPR023366">
    <property type="entry name" value="ATP_synth_asu-like_sf"/>
</dbReference>
<dbReference type="InterPro" id="IPR000793">
    <property type="entry name" value="ATP_synth_asu_C"/>
</dbReference>
<dbReference type="InterPro" id="IPR038376">
    <property type="entry name" value="ATP_synth_asu_C_sf"/>
</dbReference>
<dbReference type="InterPro" id="IPR033732">
    <property type="entry name" value="ATP_synth_F1_a_nt-bd_dom"/>
</dbReference>
<dbReference type="InterPro" id="IPR005294">
    <property type="entry name" value="ATP_synth_F1_asu"/>
</dbReference>
<dbReference type="InterPro" id="IPR020003">
    <property type="entry name" value="ATPase_a/bsu_AS"/>
</dbReference>
<dbReference type="InterPro" id="IPR004100">
    <property type="entry name" value="ATPase_F1/V1/A1_a/bsu_N"/>
</dbReference>
<dbReference type="InterPro" id="IPR036121">
    <property type="entry name" value="ATPase_F1/V1/A1_a/bsu_N_sf"/>
</dbReference>
<dbReference type="InterPro" id="IPR000194">
    <property type="entry name" value="ATPase_F1/V1/A1_a/bsu_nucl-bd"/>
</dbReference>
<dbReference type="InterPro" id="IPR027417">
    <property type="entry name" value="P-loop_NTPase"/>
</dbReference>
<dbReference type="NCBIfam" id="TIGR00962">
    <property type="entry name" value="atpA"/>
    <property type="match status" value="1"/>
</dbReference>
<dbReference type="NCBIfam" id="NF009884">
    <property type="entry name" value="PRK13343.1"/>
    <property type="match status" value="1"/>
</dbReference>
<dbReference type="PANTHER" id="PTHR48082">
    <property type="entry name" value="ATP SYNTHASE SUBUNIT ALPHA, MITOCHONDRIAL"/>
    <property type="match status" value="1"/>
</dbReference>
<dbReference type="PANTHER" id="PTHR48082:SF2">
    <property type="entry name" value="ATP SYNTHASE SUBUNIT ALPHA, MITOCHONDRIAL"/>
    <property type="match status" value="1"/>
</dbReference>
<dbReference type="Pfam" id="PF00006">
    <property type="entry name" value="ATP-synt_ab"/>
    <property type="match status" value="1"/>
</dbReference>
<dbReference type="Pfam" id="PF00306">
    <property type="entry name" value="ATP-synt_ab_C"/>
    <property type="match status" value="1"/>
</dbReference>
<dbReference type="Pfam" id="PF02874">
    <property type="entry name" value="ATP-synt_ab_N"/>
    <property type="match status" value="1"/>
</dbReference>
<dbReference type="SUPFAM" id="SSF47917">
    <property type="entry name" value="C-terminal domain of alpha and beta subunits of F1 ATP synthase"/>
    <property type="match status" value="1"/>
</dbReference>
<dbReference type="SUPFAM" id="SSF50615">
    <property type="entry name" value="N-terminal domain of alpha and beta subunits of F1 ATP synthase"/>
    <property type="match status" value="1"/>
</dbReference>
<dbReference type="SUPFAM" id="SSF52540">
    <property type="entry name" value="P-loop containing nucleoside triphosphate hydrolases"/>
    <property type="match status" value="1"/>
</dbReference>
<dbReference type="PROSITE" id="PS00152">
    <property type="entry name" value="ATPASE_ALPHA_BETA"/>
    <property type="match status" value="1"/>
</dbReference>
<evidence type="ECO:0000255" key="1">
    <source>
        <dbReference type="HAMAP-Rule" id="MF_01346"/>
    </source>
</evidence>
<evidence type="ECO:0000269" key="2">
    <source>
    </source>
</evidence>
<name>ATPA_STRLI</name>
<keyword id="KW-0066">ATP synthesis</keyword>
<keyword id="KW-0067">ATP-binding</keyword>
<keyword id="KW-1003">Cell membrane</keyword>
<keyword id="KW-0139">CF(1)</keyword>
<keyword id="KW-0903">Direct protein sequencing</keyword>
<keyword id="KW-0375">Hydrogen ion transport</keyword>
<keyword id="KW-0406">Ion transport</keyword>
<keyword id="KW-0472">Membrane</keyword>
<keyword id="KW-0547">Nucleotide-binding</keyword>
<keyword id="KW-1278">Translocase</keyword>
<keyword id="KW-0813">Transport</keyword>
<comment type="function">
    <text>Produces ATP from ADP in the presence of a proton gradient across the membrane. The alpha chain is a regulatory subunit.</text>
</comment>
<comment type="catalytic activity">
    <reaction evidence="1">
        <text>ATP + H2O + 4 H(+)(in) = ADP + phosphate + 5 H(+)(out)</text>
        <dbReference type="Rhea" id="RHEA:57720"/>
        <dbReference type="ChEBI" id="CHEBI:15377"/>
        <dbReference type="ChEBI" id="CHEBI:15378"/>
        <dbReference type="ChEBI" id="CHEBI:30616"/>
        <dbReference type="ChEBI" id="CHEBI:43474"/>
        <dbReference type="ChEBI" id="CHEBI:456216"/>
        <dbReference type="EC" id="7.1.2.2"/>
    </reaction>
</comment>
<comment type="subunit">
    <text evidence="1">F-type ATPases have 2 components, CF(1) - the catalytic core - and CF(0) - the membrane proton channel. CF(1) has five subunits: alpha(3), beta(3), gamma(1), delta(1), epsilon(1). CF(0) has three main subunits: a(1), b(2) and c(9-12). The alpha and beta chains form an alternating ring which encloses part of the gamma chain. CF(1) is attached to CF(0) by a central stalk formed by the gamma and epsilon chains, while a peripheral stalk is formed by the delta and b chains.</text>
</comment>
<comment type="subcellular location">
    <subcellularLocation>
        <location evidence="1">Cell membrane</location>
        <topology evidence="1">Peripheral membrane protein</topology>
    </subcellularLocation>
</comment>
<comment type="similarity">
    <text evidence="1">Belongs to the ATPase alpha/beta chains family.</text>
</comment>
<protein>
    <recommendedName>
        <fullName evidence="1">ATP synthase subunit alpha</fullName>
        <ecNumber evidence="1">7.1.2.2</ecNumber>
    </recommendedName>
    <alternativeName>
        <fullName evidence="1">ATP synthase F1 sector subunit alpha</fullName>
    </alternativeName>
    <alternativeName>
        <fullName evidence="1">F-ATPase subunit alpha</fullName>
    </alternativeName>
</protein>
<reference key="1">
    <citation type="journal article" date="1995" name="Gene">
        <title>The ATP synthase (F1F0) of Streptomyces lividans: sequencing of the atp operon and phylogenetic considerations with subunit beta.</title>
        <authorList>
            <person name="Hensel M."/>
            <person name="Lill H."/>
            <person name="Schmid R."/>
            <person name="Deckers-Hebestreit G."/>
            <person name="Altendorf K."/>
        </authorList>
    </citation>
    <scope>NUCLEOTIDE SEQUENCE [GENOMIC DNA]</scope>
    <scope>PROTEIN SEQUENCE OF 2-23</scope>
    <source>
        <strain>66 / 1326</strain>
    </source>
</reference>
<organism>
    <name type="scientific">Streptomyces lividans</name>
    <dbReference type="NCBI Taxonomy" id="1916"/>
    <lineage>
        <taxon>Bacteria</taxon>
        <taxon>Bacillati</taxon>
        <taxon>Actinomycetota</taxon>
        <taxon>Actinomycetes</taxon>
        <taxon>Kitasatosporales</taxon>
        <taxon>Streptomycetaceae</taxon>
        <taxon>Streptomyces</taxon>
    </lineage>
</organism>
<proteinExistence type="evidence at protein level"/>
<feature type="initiator methionine" description="Removed" evidence="2">
    <location>
        <position position="1"/>
    </location>
</feature>
<feature type="chain" id="PRO_0000144358" description="ATP synthase subunit alpha">
    <location>
        <begin position="2"/>
        <end position="529"/>
    </location>
</feature>
<feature type="binding site" evidence="1">
    <location>
        <begin position="173"/>
        <end position="180"/>
    </location>
    <ligand>
        <name>ATP</name>
        <dbReference type="ChEBI" id="CHEBI:30616"/>
    </ligand>
</feature>
<feature type="site" description="Required for activity" evidence="1">
    <location>
        <position position="374"/>
    </location>
</feature>
<accession>P50001</accession>